<comment type="function">
    <text evidence="1">Produces ATP from ADP in the presence of a proton gradient across the membrane. The V-type beta chain is a regulatory subunit.</text>
</comment>
<comment type="similarity">
    <text evidence="1">Belongs to the ATPase alpha/beta chains family.</text>
</comment>
<evidence type="ECO:0000255" key="1">
    <source>
        <dbReference type="HAMAP-Rule" id="MF_00310"/>
    </source>
</evidence>
<gene>
    <name evidence="1" type="primary">atpB</name>
    <name type="ordered locus">CLI_2689</name>
</gene>
<dbReference type="EMBL" id="CP000728">
    <property type="protein sequence ID" value="ABS39939.1"/>
    <property type="molecule type" value="Genomic_DNA"/>
</dbReference>
<dbReference type="RefSeq" id="WP_003401359.1">
    <property type="nucleotide sequence ID" value="NC_009699.1"/>
</dbReference>
<dbReference type="SMR" id="A7GGL3"/>
<dbReference type="KEGG" id="cbf:CLI_2689"/>
<dbReference type="HOGENOM" id="CLU_022916_0_0_9"/>
<dbReference type="Proteomes" id="UP000002410">
    <property type="component" value="Chromosome"/>
</dbReference>
<dbReference type="GO" id="GO:0005524">
    <property type="term" value="F:ATP binding"/>
    <property type="evidence" value="ECO:0007669"/>
    <property type="project" value="UniProtKB-UniRule"/>
</dbReference>
<dbReference type="GO" id="GO:0046933">
    <property type="term" value="F:proton-transporting ATP synthase activity, rotational mechanism"/>
    <property type="evidence" value="ECO:0007669"/>
    <property type="project" value="UniProtKB-UniRule"/>
</dbReference>
<dbReference type="GO" id="GO:0042777">
    <property type="term" value="P:proton motive force-driven plasma membrane ATP synthesis"/>
    <property type="evidence" value="ECO:0007669"/>
    <property type="project" value="UniProtKB-UniRule"/>
</dbReference>
<dbReference type="CDD" id="cd18112">
    <property type="entry name" value="ATP-synt_V_A-type_beta_C"/>
    <property type="match status" value="1"/>
</dbReference>
<dbReference type="CDD" id="cd18118">
    <property type="entry name" value="ATP-synt_V_A-type_beta_N"/>
    <property type="match status" value="1"/>
</dbReference>
<dbReference type="CDD" id="cd01135">
    <property type="entry name" value="V_A-ATPase_B"/>
    <property type="match status" value="1"/>
</dbReference>
<dbReference type="Gene3D" id="3.40.50.12240">
    <property type="match status" value="1"/>
</dbReference>
<dbReference type="HAMAP" id="MF_00310">
    <property type="entry name" value="ATP_synth_B_arch"/>
    <property type="match status" value="1"/>
</dbReference>
<dbReference type="InterPro" id="IPR055190">
    <property type="entry name" value="ATP-synt_VA_C"/>
</dbReference>
<dbReference type="InterPro" id="IPR020003">
    <property type="entry name" value="ATPase_a/bsu_AS"/>
</dbReference>
<dbReference type="InterPro" id="IPR004100">
    <property type="entry name" value="ATPase_F1/V1/A1_a/bsu_N"/>
</dbReference>
<dbReference type="InterPro" id="IPR000194">
    <property type="entry name" value="ATPase_F1/V1/A1_a/bsu_nucl-bd"/>
</dbReference>
<dbReference type="InterPro" id="IPR027417">
    <property type="entry name" value="P-loop_NTPase"/>
</dbReference>
<dbReference type="InterPro" id="IPR022879">
    <property type="entry name" value="V-ATPase_su_B/beta"/>
</dbReference>
<dbReference type="NCBIfam" id="NF003235">
    <property type="entry name" value="PRK04196.1"/>
    <property type="match status" value="1"/>
</dbReference>
<dbReference type="PANTHER" id="PTHR43389">
    <property type="entry name" value="V-TYPE PROTON ATPASE SUBUNIT B"/>
    <property type="match status" value="1"/>
</dbReference>
<dbReference type="PANTHER" id="PTHR43389:SF4">
    <property type="entry name" value="V-TYPE PROTON ATPASE SUBUNIT B"/>
    <property type="match status" value="1"/>
</dbReference>
<dbReference type="Pfam" id="PF00006">
    <property type="entry name" value="ATP-synt_ab"/>
    <property type="match status" value="1"/>
</dbReference>
<dbReference type="Pfam" id="PF02874">
    <property type="entry name" value="ATP-synt_ab_N"/>
    <property type="match status" value="1"/>
</dbReference>
<dbReference type="Pfam" id="PF22919">
    <property type="entry name" value="ATP-synt_VA_C"/>
    <property type="match status" value="1"/>
</dbReference>
<dbReference type="PIRSF" id="PIRSF039114">
    <property type="entry name" value="V-ATPsynth_beta/V-ATPase_B"/>
    <property type="match status" value="1"/>
</dbReference>
<dbReference type="SUPFAM" id="SSF47917">
    <property type="entry name" value="C-terminal domain of alpha and beta subunits of F1 ATP synthase"/>
    <property type="match status" value="1"/>
</dbReference>
<dbReference type="SUPFAM" id="SSF52540">
    <property type="entry name" value="P-loop containing nucleoside triphosphate hydrolases"/>
    <property type="match status" value="1"/>
</dbReference>
<dbReference type="PROSITE" id="PS00152">
    <property type="entry name" value="ATPASE_ALPHA_BETA"/>
    <property type="match status" value="1"/>
</dbReference>
<accession>A7GGL3</accession>
<proteinExistence type="inferred from homology"/>
<feature type="chain" id="PRO_0000322488" description="V-type ATP synthase beta chain">
    <location>
        <begin position="1"/>
        <end position="461"/>
    </location>
</feature>
<keyword id="KW-0066">ATP synthesis</keyword>
<keyword id="KW-0375">Hydrogen ion transport</keyword>
<keyword id="KW-0406">Ion transport</keyword>
<keyword id="KW-0813">Transport</keyword>
<name>VATB_CLOBL</name>
<protein>
    <recommendedName>
        <fullName evidence="1">V-type ATP synthase beta chain</fullName>
    </recommendedName>
    <alternativeName>
        <fullName evidence="1">V-ATPase subunit B</fullName>
    </alternativeName>
</protein>
<reference key="1">
    <citation type="submission" date="2007-06" db="EMBL/GenBank/DDBJ databases">
        <authorList>
            <person name="Brinkac L.M."/>
            <person name="Daugherty S."/>
            <person name="Dodson R.J."/>
            <person name="Madupu R."/>
            <person name="Brown J.L."/>
            <person name="Bruce D."/>
            <person name="Detter C."/>
            <person name="Munk C."/>
            <person name="Smith L.A."/>
            <person name="Smith T.J."/>
            <person name="White O."/>
            <person name="Brettin T.S."/>
        </authorList>
    </citation>
    <scope>NUCLEOTIDE SEQUENCE [LARGE SCALE GENOMIC DNA]</scope>
    <source>
        <strain>Langeland / NCTC 10281 / Type F</strain>
    </source>
</reference>
<sequence>MLKEYRTVKEVVGPLMLVDQVDGVSFDELVEIELHNGEKRRGKVLEINKDKAMVQLFEGSAGINLKGAKVKFLGKPLELGVSEDMLGRVFDGLGNPKDGGPKIIPDKKLDINGIPINPVARNYPDEFIQTGVSAIDGLNTLVRGQKLPVFSGSGLPHAELAAQIARQAKVLNSDSKFAVVFAAIGTTFEEAQYFIDDFTKTGAIDRAVLFINLANDPAIERIATPRMALTAAEYLAFEKGMHVLVIMTDITNYCEALREVSAARKEVPGRRGYPGYLYTDLSTLYERAGRILGKEGSITQIPILTMPEDDKTHPIPDLTGYITEGQIILSRELYKKGIMPPIDVLPSLSRLKDKGIGKGKTREDHADTMNQLFSAYAQGKQAKELSVILGESALSDTDKLYAKFADAFEEEYVSQGFTTNRTIEETLNLGWKLLTILPKSELKRIRDEYLEKYLSKAEESK</sequence>
<organism>
    <name type="scientific">Clostridium botulinum (strain Langeland / NCTC 10281 / Type F)</name>
    <dbReference type="NCBI Taxonomy" id="441772"/>
    <lineage>
        <taxon>Bacteria</taxon>
        <taxon>Bacillati</taxon>
        <taxon>Bacillota</taxon>
        <taxon>Clostridia</taxon>
        <taxon>Eubacteriales</taxon>
        <taxon>Clostridiaceae</taxon>
        <taxon>Clostridium</taxon>
    </lineage>
</organism>